<dbReference type="EMBL" id="U53573">
    <property type="protein sequence ID" value="AAC50532.1"/>
    <property type="molecule type" value="Genomic_DNA"/>
</dbReference>
<dbReference type="RefSeq" id="YP_009163354.1">
    <property type="nucleotide sequence ID" value="NC_027740.1"/>
</dbReference>
<dbReference type="SMR" id="Q35677"/>
<dbReference type="GeneID" id="25397701"/>
<dbReference type="CTD" id="4519"/>
<dbReference type="GO" id="GO:0005743">
    <property type="term" value="C:mitochondrial inner membrane"/>
    <property type="evidence" value="ECO:0007669"/>
    <property type="project" value="UniProtKB-SubCell"/>
</dbReference>
<dbReference type="GO" id="GO:0045275">
    <property type="term" value="C:respiratory chain complex III"/>
    <property type="evidence" value="ECO:0007669"/>
    <property type="project" value="InterPro"/>
</dbReference>
<dbReference type="GO" id="GO:0046872">
    <property type="term" value="F:metal ion binding"/>
    <property type="evidence" value="ECO:0007669"/>
    <property type="project" value="UniProtKB-KW"/>
</dbReference>
<dbReference type="GO" id="GO:0008121">
    <property type="term" value="F:ubiquinol-cytochrome-c reductase activity"/>
    <property type="evidence" value="ECO:0007669"/>
    <property type="project" value="InterPro"/>
</dbReference>
<dbReference type="GO" id="GO:0006122">
    <property type="term" value="P:mitochondrial electron transport, ubiquinol to cytochrome c"/>
    <property type="evidence" value="ECO:0007669"/>
    <property type="project" value="TreeGrafter"/>
</dbReference>
<dbReference type="CDD" id="cd00290">
    <property type="entry name" value="cytochrome_b_C"/>
    <property type="match status" value="1"/>
</dbReference>
<dbReference type="CDD" id="cd00284">
    <property type="entry name" value="Cytochrome_b_N"/>
    <property type="match status" value="1"/>
</dbReference>
<dbReference type="FunFam" id="1.20.810.10:FF:000002">
    <property type="entry name" value="Cytochrome b"/>
    <property type="match status" value="1"/>
</dbReference>
<dbReference type="Gene3D" id="1.20.810.10">
    <property type="entry name" value="Cytochrome Bc1 Complex, Chain C"/>
    <property type="match status" value="1"/>
</dbReference>
<dbReference type="InterPro" id="IPR005798">
    <property type="entry name" value="Cyt_b/b6_C"/>
</dbReference>
<dbReference type="InterPro" id="IPR036150">
    <property type="entry name" value="Cyt_b/b6_C_sf"/>
</dbReference>
<dbReference type="InterPro" id="IPR005797">
    <property type="entry name" value="Cyt_b/b6_N"/>
</dbReference>
<dbReference type="InterPro" id="IPR027387">
    <property type="entry name" value="Cytb/b6-like_sf"/>
</dbReference>
<dbReference type="InterPro" id="IPR030689">
    <property type="entry name" value="Cytochrome_b"/>
</dbReference>
<dbReference type="InterPro" id="IPR048260">
    <property type="entry name" value="Cytochrome_b_C_euk/bac"/>
</dbReference>
<dbReference type="InterPro" id="IPR048259">
    <property type="entry name" value="Cytochrome_b_N_euk/bac"/>
</dbReference>
<dbReference type="InterPro" id="IPR016174">
    <property type="entry name" value="Di-haem_cyt_TM"/>
</dbReference>
<dbReference type="PANTHER" id="PTHR19271">
    <property type="entry name" value="CYTOCHROME B"/>
    <property type="match status" value="1"/>
</dbReference>
<dbReference type="PANTHER" id="PTHR19271:SF16">
    <property type="entry name" value="CYTOCHROME B"/>
    <property type="match status" value="1"/>
</dbReference>
<dbReference type="Pfam" id="PF00032">
    <property type="entry name" value="Cytochrom_B_C"/>
    <property type="match status" value="1"/>
</dbReference>
<dbReference type="Pfam" id="PF00033">
    <property type="entry name" value="Cytochrome_B"/>
    <property type="match status" value="1"/>
</dbReference>
<dbReference type="PIRSF" id="PIRSF038885">
    <property type="entry name" value="COB"/>
    <property type="match status" value="1"/>
</dbReference>
<dbReference type="SUPFAM" id="SSF81648">
    <property type="entry name" value="a domain/subunit of cytochrome bc1 complex (Ubiquinol-cytochrome c reductase)"/>
    <property type="match status" value="1"/>
</dbReference>
<dbReference type="SUPFAM" id="SSF81342">
    <property type="entry name" value="Transmembrane di-heme cytochromes"/>
    <property type="match status" value="1"/>
</dbReference>
<dbReference type="PROSITE" id="PS51003">
    <property type="entry name" value="CYTB_CTER"/>
    <property type="match status" value="1"/>
</dbReference>
<dbReference type="PROSITE" id="PS51002">
    <property type="entry name" value="CYTB_NTER"/>
    <property type="match status" value="1"/>
</dbReference>
<name>CYB_PROTA</name>
<feature type="chain" id="PRO_0000061445" description="Cytochrome b">
    <location>
        <begin position="1"/>
        <end position="379"/>
    </location>
</feature>
<feature type="transmembrane region" description="Helical" evidence="2">
    <location>
        <begin position="33"/>
        <end position="53"/>
    </location>
</feature>
<feature type="transmembrane region" description="Helical" evidence="2">
    <location>
        <begin position="77"/>
        <end position="98"/>
    </location>
</feature>
<feature type="transmembrane region" description="Helical" evidence="2">
    <location>
        <begin position="113"/>
        <end position="133"/>
    </location>
</feature>
<feature type="transmembrane region" description="Helical" evidence="2">
    <location>
        <begin position="178"/>
        <end position="198"/>
    </location>
</feature>
<feature type="transmembrane region" description="Helical" evidence="2">
    <location>
        <begin position="226"/>
        <end position="246"/>
    </location>
</feature>
<feature type="transmembrane region" description="Helical" evidence="2">
    <location>
        <begin position="288"/>
        <end position="308"/>
    </location>
</feature>
<feature type="transmembrane region" description="Helical" evidence="2">
    <location>
        <begin position="320"/>
        <end position="340"/>
    </location>
</feature>
<feature type="transmembrane region" description="Helical" evidence="2">
    <location>
        <begin position="347"/>
        <end position="367"/>
    </location>
</feature>
<feature type="binding site" description="axial binding residue" evidence="2">
    <location>
        <position position="83"/>
    </location>
    <ligand>
        <name>heme b</name>
        <dbReference type="ChEBI" id="CHEBI:60344"/>
        <label>b562</label>
    </ligand>
    <ligandPart>
        <name>Fe</name>
        <dbReference type="ChEBI" id="CHEBI:18248"/>
    </ligandPart>
</feature>
<feature type="binding site" description="axial binding residue" evidence="2">
    <location>
        <position position="97"/>
    </location>
    <ligand>
        <name>heme b</name>
        <dbReference type="ChEBI" id="CHEBI:60344"/>
        <label>b566</label>
    </ligand>
    <ligandPart>
        <name>Fe</name>
        <dbReference type="ChEBI" id="CHEBI:18248"/>
    </ligandPart>
</feature>
<feature type="binding site" description="axial binding residue" evidence="2">
    <location>
        <position position="182"/>
    </location>
    <ligand>
        <name>heme b</name>
        <dbReference type="ChEBI" id="CHEBI:60344"/>
        <label>b562</label>
    </ligand>
    <ligandPart>
        <name>Fe</name>
        <dbReference type="ChEBI" id="CHEBI:18248"/>
    </ligandPart>
</feature>
<feature type="binding site" description="axial binding residue" evidence="2">
    <location>
        <position position="196"/>
    </location>
    <ligand>
        <name>heme b</name>
        <dbReference type="ChEBI" id="CHEBI:60344"/>
        <label>b566</label>
    </ligand>
    <ligandPart>
        <name>Fe</name>
        <dbReference type="ChEBI" id="CHEBI:18248"/>
    </ligandPart>
</feature>
<feature type="binding site" evidence="2">
    <location>
        <position position="201"/>
    </location>
    <ligand>
        <name>a ubiquinone</name>
        <dbReference type="ChEBI" id="CHEBI:16389"/>
    </ligand>
</feature>
<comment type="function">
    <text evidence="2">Component of the ubiquinol-cytochrome c reductase complex (complex III or cytochrome b-c1 complex) that is part of the mitochondrial respiratory chain. The b-c1 complex mediates electron transfer from ubiquinol to cytochrome c. Contributes to the generation of a proton gradient across the mitochondrial membrane that is then used for ATP synthesis.</text>
</comment>
<comment type="cofactor">
    <cofactor evidence="2">
        <name>heme b</name>
        <dbReference type="ChEBI" id="CHEBI:60344"/>
    </cofactor>
    <text evidence="2">Binds 2 heme b groups non-covalently.</text>
</comment>
<comment type="subunit">
    <text evidence="2">The cytochrome bc1 complex contains 11 subunits: 3 respiratory subunits (MT-CYB, CYC1 and UQCRFS1), 2 core proteins (UQCRC1 and UQCRC2) and 6 low-molecular weight proteins (UQCRH/QCR6, UQCRB/QCR7, UQCRQ/QCR8, UQCR10/QCR9, UQCR11/QCR10 and a cleavage product of UQCRFS1). This cytochrome bc1 complex then forms a dimer.</text>
</comment>
<comment type="subcellular location">
    <subcellularLocation>
        <location evidence="2">Mitochondrion inner membrane</location>
        <topology evidence="2">Multi-pass membrane protein</topology>
    </subcellularLocation>
</comment>
<comment type="miscellaneous">
    <text evidence="1">Heme 1 (or BL or b562) is low-potential and absorbs at about 562 nm, and heme 2 (or BH or b566) is high-potential and absorbs at about 566 nm.</text>
</comment>
<comment type="similarity">
    <text evidence="3 4">Belongs to the cytochrome b family.</text>
</comment>
<comment type="caution">
    <text evidence="2">The full-length protein contains only eight transmembrane helices, not nine as predicted by bioinformatics tools.</text>
</comment>
<accession>Q35677</accession>
<evidence type="ECO:0000250" key="1"/>
<evidence type="ECO:0000250" key="2">
    <source>
        <dbReference type="UniProtKB" id="P00157"/>
    </source>
</evidence>
<evidence type="ECO:0000255" key="3">
    <source>
        <dbReference type="PROSITE-ProRule" id="PRU00967"/>
    </source>
</evidence>
<evidence type="ECO:0000255" key="4">
    <source>
        <dbReference type="PROSITE-ProRule" id="PRU00968"/>
    </source>
</evidence>
<geneLocation type="mitochondrion"/>
<organism>
    <name type="scientific">Propithecus tattersalli</name>
    <name type="common">Golden-crowned Sifaka</name>
    <name type="synonym">Tattersall's sifaka</name>
    <dbReference type="NCBI Taxonomy" id="30601"/>
    <lineage>
        <taxon>Eukaryota</taxon>
        <taxon>Metazoa</taxon>
        <taxon>Chordata</taxon>
        <taxon>Craniata</taxon>
        <taxon>Vertebrata</taxon>
        <taxon>Euteleostomi</taxon>
        <taxon>Mammalia</taxon>
        <taxon>Eutheria</taxon>
        <taxon>Euarchontoglires</taxon>
        <taxon>Primates</taxon>
        <taxon>Strepsirrhini</taxon>
        <taxon>Lemuriformes</taxon>
        <taxon>Indriidae</taxon>
        <taxon>Propithecus</taxon>
    </lineage>
</organism>
<gene>
    <name type="primary">MT-CYB</name>
    <name type="synonym">COB</name>
    <name type="synonym">CYTB</name>
    <name type="synonym">MTCYB</name>
</gene>
<protein>
    <recommendedName>
        <fullName>Cytochrome b</fullName>
    </recommendedName>
    <alternativeName>
        <fullName>Complex III subunit 3</fullName>
    </alternativeName>
    <alternativeName>
        <fullName>Complex III subunit III</fullName>
    </alternativeName>
    <alternativeName>
        <fullName>Cytochrome b-c1 complex subunit 3</fullName>
    </alternativeName>
    <alternativeName>
        <fullName>Ubiquinol-cytochrome-c reductase complex cytochrome b subunit</fullName>
    </alternativeName>
</protein>
<reference key="1">
    <citation type="journal article" date="1996" name="Proc. Natl. Acad. Sci. U.S.A.">
        <title>Ancient single origin for Malagasy primates.</title>
        <authorList>
            <person name="Yoder A.D."/>
            <person name="Cartmill M."/>
            <person name="Ruvolo M."/>
            <person name="Smith K."/>
            <person name="Vilgalys R."/>
        </authorList>
    </citation>
    <scope>NUCLEOTIDE SEQUENCE [GENOMIC DNA]</scope>
</reference>
<keyword id="KW-0249">Electron transport</keyword>
<keyword id="KW-0349">Heme</keyword>
<keyword id="KW-0408">Iron</keyword>
<keyword id="KW-0472">Membrane</keyword>
<keyword id="KW-0479">Metal-binding</keyword>
<keyword id="KW-0496">Mitochondrion</keyword>
<keyword id="KW-0999">Mitochondrion inner membrane</keyword>
<keyword id="KW-0679">Respiratory chain</keyword>
<keyword id="KW-0812">Transmembrane</keyword>
<keyword id="KW-1133">Transmembrane helix</keyword>
<keyword id="KW-0813">Transport</keyword>
<keyword id="KW-0830">Ubiquinone</keyword>
<sequence>MTNIRKNHPLIKIMNSSFIDLPAPSNISSWWNFGSLLGACLALQIITGLFLAMHYTADTTTAFSSVTHICRDVNYGWVIRYLHANGASMFFLCLFIHVGRGLYYGSFVLSETWNIGIILLFTVMATAFMGYVLPWGQMSFWGATVITNLLSAIPYIGTNLVEWIWGGFSVDKATLTRFFAFHFILPFIITALVMVHLLFLHETGSNNPLGIPSNPDKIPFHPYYTIKDLLGLILLILPLMTLVFFSPDLLGDPDNYTPANPLSTPPHIKPEWYFLFAYAILRSIPNKLGGVLALIFSILILAIIPLLQTAKQQSMMFRPLSQCLFWILVADLFTLTWIGGQPVEHPFITIGQAASILYFSLILIAMPTVSLMENKMLKW</sequence>
<proteinExistence type="inferred from homology"/>